<reference key="1">
    <citation type="journal article" date="1999" name="Genomics">
        <title>TOM1 genes map to human chromosome 22q13.1 and mouse chromosome 8C1 and encode proteins similar to the endosomal proteins HGS and STAM.</title>
        <authorList>
            <person name="Seroussi E."/>
            <person name="Kedra D."/>
            <person name="Kost-Alimova M."/>
            <person name="Sandberg-Nordqvist A.-C."/>
            <person name="Fransson I."/>
            <person name="Jacobs J.F.M."/>
            <person name="Fu Y."/>
            <person name="Pan H.-Q."/>
            <person name="Roe B.A."/>
            <person name="Imreh S."/>
            <person name="Dumanski J.P."/>
        </authorList>
    </citation>
    <scope>NUCLEOTIDE SEQUENCE [MRNA] (ISOFORM 1)</scope>
</reference>
<reference key="2">
    <citation type="journal article" date="2005" name="Science">
        <title>The transcriptional landscape of the mammalian genome.</title>
        <authorList>
            <person name="Carninci P."/>
            <person name="Kasukawa T."/>
            <person name="Katayama S."/>
            <person name="Gough J."/>
            <person name="Frith M.C."/>
            <person name="Maeda N."/>
            <person name="Oyama R."/>
            <person name="Ravasi T."/>
            <person name="Lenhard B."/>
            <person name="Wells C."/>
            <person name="Kodzius R."/>
            <person name="Shimokawa K."/>
            <person name="Bajic V.B."/>
            <person name="Brenner S.E."/>
            <person name="Batalov S."/>
            <person name="Forrest A.R."/>
            <person name="Zavolan M."/>
            <person name="Davis M.J."/>
            <person name="Wilming L.G."/>
            <person name="Aidinis V."/>
            <person name="Allen J.E."/>
            <person name="Ambesi-Impiombato A."/>
            <person name="Apweiler R."/>
            <person name="Aturaliya R.N."/>
            <person name="Bailey T.L."/>
            <person name="Bansal M."/>
            <person name="Baxter L."/>
            <person name="Beisel K.W."/>
            <person name="Bersano T."/>
            <person name="Bono H."/>
            <person name="Chalk A.M."/>
            <person name="Chiu K.P."/>
            <person name="Choudhary V."/>
            <person name="Christoffels A."/>
            <person name="Clutterbuck D.R."/>
            <person name="Crowe M.L."/>
            <person name="Dalla E."/>
            <person name="Dalrymple B.P."/>
            <person name="de Bono B."/>
            <person name="Della Gatta G."/>
            <person name="di Bernardo D."/>
            <person name="Down T."/>
            <person name="Engstrom P."/>
            <person name="Fagiolini M."/>
            <person name="Faulkner G."/>
            <person name="Fletcher C.F."/>
            <person name="Fukushima T."/>
            <person name="Furuno M."/>
            <person name="Futaki S."/>
            <person name="Gariboldi M."/>
            <person name="Georgii-Hemming P."/>
            <person name="Gingeras T.R."/>
            <person name="Gojobori T."/>
            <person name="Green R.E."/>
            <person name="Gustincich S."/>
            <person name="Harbers M."/>
            <person name="Hayashi Y."/>
            <person name="Hensch T.K."/>
            <person name="Hirokawa N."/>
            <person name="Hill D."/>
            <person name="Huminiecki L."/>
            <person name="Iacono M."/>
            <person name="Ikeo K."/>
            <person name="Iwama A."/>
            <person name="Ishikawa T."/>
            <person name="Jakt M."/>
            <person name="Kanapin A."/>
            <person name="Katoh M."/>
            <person name="Kawasawa Y."/>
            <person name="Kelso J."/>
            <person name="Kitamura H."/>
            <person name="Kitano H."/>
            <person name="Kollias G."/>
            <person name="Krishnan S.P."/>
            <person name="Kruger A."/>
            <person name="Kummerfeld S.K."/>
            <person name="Kurochkin I.V."/>
            <person name="Lareau L.F."/>
            <person name="Lazarevic D."/>
            <person name="Lipovich L."/>
            <person name="Liu J."/>
            <person name="Liuni S."/>
            <person name="McWilliam S."/>
            <person name="Madan Babu M."/>
            <person name="Madera M."/>
            <person name="Marchionni L."/>
            <person name="Matsuda H."/>
            <person name="Matsuzawa S."/>
            <person name="Miki H."/>
            <person name="Mignone F."/>
            <person name="Miyake S."/>
            <person name="Morris K."/>
            <person name="Mottagui-Tabar S."/>
            <person name="Mulder N."/>
            <person name="Nakano N."/>
            <person name="Nakauchi H."/>
            <person name="Ng P."/>
            <person name="Nilsson R."/>
            <person name="Nishiguchi S."/>
            <person name="Nishikawa S."/>
            <person name="Nori F."/>
            <person name="Ohara O."/>
            <person name="Okazaki Y."/>
            <person name="Orlando V."/>
            <person name="Pang K.C."/>
            <person name="Pavan W.J."/>
            <person name="Pavesi G."/>
            <person name="Pesole G."/>
            <person name="Petrovsky N."/>
            <person name="Piazza S."/>
            <person name="Reed J."/>
            <person name="Reid J.F."/>
            <person name="Ring B.Z."/>
            <person name="Ringwald M."/>
            <person name="Rost B."/>
            <person name="Ruan Y."/>
            <person name="Salzberg S.L."/>
            <person name="Sandelin A."/>
            <person name="Schneider C."/>
            <person name="Schoenbach C."/>
            <person name="Sekiguchi K."/>
            <person name="Semple C.A."/>
            <person name="Seno S."/>
            <person name="Sessa L."/>
            <person name="Sheng Y."/>
            <person name="Shibata Y."/>
            <person name="Shimada H."/>
            <person name="Shimada K."/>
            <person name="Silva D."/>
            <person name="Sinclair B."/>
            <person name="Sperling S."/>
            <person name="Stupka E."/>
            <person name="Sugiura K."/>
            <person name="Sultana R."/>
            <person name="Takenaka Y."/>
            <person name="Taki K."/>
            <person name="Tammoja K."/>
            <person name="Tan S.L."/>
            <person name="Tang S."/>
            <person name="Taylor M.S."/>
            <person name="Tegner J."/>
            <person name="Teichmann S.A."/>
            <person name="Ueda H.R."/>
            <person name="van Nimwegen E."/>
            <person name="Verardo R."/>
            <person name="Wei C.L."/>
            <person name="Yagi K."/>
            <person name="Yamanishi H."/>
            <person name="Zabarovsky E."/>
            <person name="Zhu S."/>
            <person name="Zimmer A."/>
            <person name="Hide W."/>
            <person name="Bult C."/>
            <person name="Grimmond S.M."/>
            <person name="Teasdale R.D."/>
            <person name="Liu E.T."/>
            <person name="Brusic V."/>
            <person name="Quackenbush J."/>
            <person name="Wahlestedt C."/>
            <person name="Mattick J.S."/>
            <person name="Hume D.A."/>
            <person name="Kai C."/>
            <person name="Sasaki D."/>
            <person name="Tomaru Y."/>
            <person name="Fukuda S."/>
            <person name="Kanamori-Katayama M."/>
            <person name="Suzuki M."/>
            <person name="Aoki J."/>
            <person name="Arakawa T."/>
            <person name="Iida J."/>
            <person name="Imamura K."/>
            <person name="Itoh M."/>
            <person name="Kato T."/>
            <person name="Kawaji H."/>
            <person name="Kawagashira N."/>
            <person name="Kawashima T."/>
            <person name="Kojima M."/>
            <person name="Kondo S."/>
            <person name="Konno H."/>
            <person name="Nakano K."/>
            <person name="Ninomiya N."/>
            <person name="Nishio T."/>
            <person name="Okada M."/>
            <person name="Plessy C."/>
            <person name="Shibata K."/>
            <person name="Shiraki T."/>
            <person name="Suzuki S."/>
            <person name="Tagami M."/>
            <person name="Waki K."/>
            <person name="Watahiki A."/>
            <person name="Okamura-Oho Y."/>
            <person name="Suzuki H."/>
            <person name="Kawai J."/>
            <person name="Hayashizaki Y."/>
        </authorList>
    </citation>
    <scope>NUCLEOTIDE SEQUENCE [LARGE SCALE MRNA] (ISOFORMS 1 AND 2)</scope>
    <source>
        <strain>C57BL/6J</strain>
        <tissue>Thymus</tissue>
    </source>
</reference>
<reference key="3">
    <citation type="journal article" date="2004" name="Genome Res.">
        <title>The status, quality, and expansion of the NIH full-length cDNA project: the Mammalian Gene Collection (MGC).</title>
        <authorList>
            <consortium name="The MGC Project Team"/>
        </authorList>
    </citation>
    <scope>NUCLEOTIDE SEQUENCE [LARGE SCALE MRNA] (ISOFORM 1)</scope>
    <source>
        <tissue>Colon</tissue>
    </source>
</reference>
<reference key="4">
    <citation type="journal article" date="2007" name="Proc. Natl. Acad. Sci. U.S.A.">
        <title>Large-scale phosphorylation analysis of mouse liver.</title>
        <authorList>
            <person name="Villen J."/>
            <person name="Beausoleil S.A."/>
            <person name="Gerber S.A."/>
            <person name="Gygi S.P."/>
        </authorList>
    </citation>
    <scope>PHOSPHORYLATION [LARGE SCALE ANALYSIS] AT SER-176</scope>
    <scope>IDENTIFICATION BY MASS SPECTROMETRY [LARGE SCALE ANALYSIS]</scope>
    <source>
        <tissue>Liver</tissue>
    </source>
</reference>
<reference key="5">
    <citation type="journal article" date="2010" name="Cell">
        <title>A tissue-specific atlas of mouse protein phosphorylation and expression.</title>
        <authorList>
            <person name="Huttlin E.L."/>
            <person name="Jedrychowski M.P."/>
            <person name="Elias J.E."/>
            <person name="Goswami T."/>
            <person name="Rad R."/>
            <person name="Beausoleil S.A."/>
            <person name="Villen J."/>
            <person name="Haas W."/>
            <person name="Sowa M.E."/>
            <person name="Gygi S.P."/>
        </authorList>
    </citation>
    <scope>PHOSPHORYLATION [LARGE SCALE ANALYSIS] AT SER-160; THR-164; SER-176; SER-180 AND SER-208</scope>
    <scope>IDENTIFICATION BY MASS SPECTROMETRY [LARGE SCALE ANALYSIS]</scope>
    <source>
        <tissue>Brain</tissue>
        <tissue>Brown adipose tissue</tissue>
        <tissue>Heart</tissue>
        <tissue>Kidney</tissue>
        <tissue>Liver</tissue>
        <tissue>Lung</tissue>
        <tissue>Pancreas</tissue>
        <tissue>Spleen</tissue>
        <tissue>Testis</tissue>
    </source>
</reference>
<reference key="6">
    <citation type="journal article" date="2015" name="J. Cell Sci.">
        <title>TOM1 is a PI5P effector involved in the regulation of endosomal maturation.</title>
        <authorList>
            <person name="Boal F."/>
            <person name="Mansour R."/>
            <person name="Gayral M."/>
            <person name="Saland E."/>
            <person name="Chicanne G."/>
            <person name="Xuereb J.M."/>
            <person name="Marcellin M."/>
            <person name="Burlet-Schiltz O."/>
            <person name="Sansonetti P.J."/>
            <person name="Payrastre B."/>
            <person name="Tronchere H."/>
        </authorList>
    </citation>
    <scope>FUNCTION</scope>
    <scope>SUBCELLULAR LOCATION</scope>
    <scope>IDENTIFICATION BY MASS SPECTROMETRY</scope>
</reference>
<gene>
    <name evidence="8" type="primary">Tom1</name>
</gene>
<comment type="function">
    <text evidence="1 5">Adapter protein that plays a role in the intracellular membrane trafficking of ubiquitinated proteins, thereby participating in autophagy, ubiquitination-dependent signaling and receptor recycling pathways (By similarity). Acts as a MYO6/Myosin VI adapter protein that targets MYO6 to endocytic structures (By similarity). Together with MYO6, required for autophagosomal delivery of endocytic cargo, the maturation of autophagosomes and their fusion with lysosomes (By similarity). MYO6 links TOM1 with autophagy receptors, such as TAX1BP1; CALCOCO2/NDP52 and OPTN (By similarity). Binds to polyubiquitinated proteins via its GAT domain (By similarity). In a complex with TOLLIP, recruits ubiquitin-conjugated proteins onto early endosomes (By similarity). The Tom1-Tollip complex may regulate endosomal trafficking by linking polyubiquitinated proteins to clathrin (By similarity). Mediates clathrin recruitment to early endosomes by ZFYVE16 (By similarity). Modulates binding of TOLLIP to phosphatidylinositol 3-phosphate (PtdIns(3)P) via binding competition; the association with TOLLIP may favor the release of TOLLIP from endosomal membranes, allowing TOLLIP to commit to cargo trafficking (By similarity). Acts as a phosphatidylinositol 5-phosphate (PtdIns(5)P) effector by binding to PtdIns(5)P, thereby regulating endosomal maturation (PubMed:25588840). PtdIns(5)P-dependent recruitment to signaling endosomes may block endosomal maturation (PubMed:25588840). Also inhibits Toll-like receptor (TLR) signaling and participates in immune receptor recycling (By similarity).</text>
</comment>
<comment type="subunit">
    <text evidence="1">Found in a complex with TOLLIP; interacts (via GAT domain) with TOLLIP (via N-terminus); the interactions leads to TOM1-recruitment to endosomes and inhibition of TOLLIP binding to PtdIns(3)P (By similarity). Interacts (via GAT domain and the C-terminal part of the VHS domain) with UBC/ubiquitin (By similarity). Interacts (via clathrin box and C-terminus) with clathrin heavy chain (By similarity). Interacts with MYO6 (By similarity). Interacts with TAX1BP1; CALCOCO2/NDP52 and OPTN; the interaction is indirect and is mediated by MYO6, which acts as a bridge between TOM1 and the three autophagy receptors (By similarity). Interacts (via C-terminus) with ZFYVE16 (via C-terminus); interaction is required to target TOM1 and clathrin to endosomes (By similarity). Interacts with LRBA (By similarity).</text>
</comment>
<comment type="interaction">
    <interactant intactId="EBI-74264">
        <id>O88746</id>
    </interactant>
    <interactant intactId="EBI-74272">
        <id>Q9QZ06</id>
        <label>Tollip</label>
    </interactant>
    <organismsDiffer>false</organismsDiffer>
    <experiments>2</experiments>
</comment>
<comment type="subcellular location">
    <subcellularLocation>
        <location evidence="5">Cytoplasm</location>
    </subcellularLocation>
    <subcellularLocation>
        <location evidence="5">Endosome membrane</location>
        <topology evidence="7">Peripheral membrane protein</topology>
    </subcellularLocation>
    <subcellularLocation>
        <location evidence="1">Early endosome membrane</location>
        <topology evidence="7">Peripheral membrane protein</topology>
    </subcellularLocation>
    <text evidence="1 5">Localized to endo/exosomal vesicles (PubMed:25588840). Enriched on signaling endosomes (PubMed:25588840). Recruited to early endosomes by TOLLIP and by PtdIns(5)P (By similarity).</text>
</comment>
<comment type="alternative products">
    <event type="alternative splicing"/>
    <isoform>
        <id>O88746-1</id>
        <name>1</name>
        <sequence type="displayed"/>
    </isoform>
    <isoform>
        <id>O88746-2</id>
        <name>2</name>
        <sequence type="described" ref="VSP_003991 VSP_003992"/>
    </isoform>
</comment>
<comment type="tissue specificity">
    <text>Ubiquitous. In adult brain, it is highly expressed at the mesencephalic level, in the hippocampal formation and medial lemniscus. In cerebellum, it is highly expressed in Purkinje cells and granular layers.</text>
</comment>
<comment type="developmental stage">
    <text>Ubiquitously expressed in the embryo, with a higher expression in the intestines.</text>
</comment>
<comment type="domain">
    <text evidence="1">The GAT domain and the VHS domain are required for the interaction with polyubiquitinated proteins.</text>
</comment>
<comment type="domain">
    <text evidence="1">The VHS domain binds to phosphatidylinositol monophosphates (By similarity). The KRKK motif within the VHS domain is required for binding to phosphatidylinositol monophosphates, with a preference for phosphatidylinositol 5-phosphate (PtdIns(5)P) (By similarity).</text>
</comment>
<comment type="PTM">
    <text evidence="1">Monoubiquitinated.</text>
</comment>
<comment type="similarity">
    <text evidence="7">Belongs to the TOM1 family.</text>
</comment>
<accession>O88746</accession>
<accession>Q3V4C6</accession>
<accession>Q9D120</accession>
<name>TOM1_MOUSE</name>
<dbReference type="EMBL" id="AJ006972">
    <property type="protein sequence ID" value="CAA07361.1"/>
    <property type="molecule type" value="mRNA"/>
</dbReference>
<dbReference type="EMBL" id="AK004063">
    <property type="protein sequence ID" value="BAE43160.1"/>
    <property type="molecule type" value="mRNA"/>
</dbReference>
<dbReference type="EMBL" id="AK028398">
    <property type="protein sequence ID" value="BAC25932.1"/>
    <property type="molecule type" value="mRNA"/>
</dbReference>
<dbReference type="EMBL" id="BC021633">
    <property type="protein sequence ID" value="AAH21633.1"/>
    <property type="molecule type" value="mRNA"/>
</dbReference>
<dbReference type="CCDS" id="CCDS52601.1">
    <molecule id="O88746-1"/>
</dbReference>
<dbReference type="RefSeq" id="NP_035752.1">
    <molecule id="O88746-1"/>
    <property type="nucleotide sequence ID" value="NM_011622.4"/>
</dbReference>
<dbReference type="SMR" id="O88746"/>
<dbReference type="BioGRID" id="204274">
    <property type="interactions" value="10"/>
</dbReference>
<dbReference type="FunCoup" id="O88746">
    <property type="interactions" value="1219"/>
</dbReference>
<dbReference type="IntAct" id="O88746">
    <property type="interactions" value="3"/>
</dbReference>
<dbReference type="STRING" id="10090.ENSMUSP00000077891"/>
<dbReference type="GlyGen" id="O88746">
    <property type="glycosylation" value="6 sites, 1 O-linked glycan (3 sites)"/>
</dbReference>
<dbReference type="iPTMnet" id="O88746"/>
<dbReference type="PhosphoSitePlus" id="O88746"/>
<dbReference type="SwissPalm" id="O88746"/>
<dbReference type="jPOST" id="O88746"/>
<dbReference type="PaxDb" id="10090-ENSMUSP00000036849"/>
<dbReference type="PeptideAtlas" id="O88746"/>
<dbReference type="ProteomicsDB" id="258813">
    <molecule id="O88746-1"/>
</dbReference>
<dbReference type="ProteomicsDB" id="258814">
    <molecule id="O88746-2"/>
</dbReference>
<dbReference type="Pumba" id="O88746"/>
<dbReference type="Antibodypedia" id="208">
    <property type="antibodies" value="201 antibodies from 27 providers"/>
</dbReference>
<dbReference type="DNASU" id="21968"/>
<dbReference type="Ensembl" id="ENSMUST00000165630.3">
    <molecule id="O88746-1"/>
    <property type="protein sequence ID" value="ENSMUSP00000130854.2"/>
    <property type="gene ID" value="ENSMUSG00000042870.16"/>
</dbReference>
<dbReference type="GeneID" id="21968"/>
<dbReference type="KEGG" id="mmu:21968"/>
<dbReference type="UCSC" id="uc009mha.2">
    <molecule id="O88746-1"/>
    <property type="organism name" value="mouse"/>
</dbReference>
<dbReference type="UCSC" id="uc009mhb.2">
    <molecule id="O88746-2"/>
    <property type="organism name" value="mouse"/>
</dbReference>
<dbReference type="AGR" id="MGI:1338026"/>
<dbReference type="CTD" id="10043"/>
<dbReference type="MGI" id="MGI:1338026">
    <property type="gene designation" value="Tom1"/>
</dbReference>
<dbReference type="VEuPathDB" id="HostDB:ENSMUSG00000042870"/>
<dbReference type="eggNOG" id="KOG1087">
    <property type="taxonomic scope" value="Eukaryota"/>
</dbReference>
<dbReference type="GeneTree" id="ENSGT00940000156865"/>
<dbReference type="HOGENOM" id="CLU_043812_3_0_1"/>
<dbReference type="InParanoid" id="O88746"/>
<dbReference type="OMA" id="GNHKSDM"/>
<dbReference type="OrthoDB" id="2018246at2759"/>
<dbReference type="PhylomeDB" id="O88746"/>
<dbReference type="TreeFam" id="TF314105"/>
<dbReference type="Reactome" id="R-MMU-6798695">
    <property type="pathway name" value="Neutrophil degranulation"/>
</dbReference>
<dbReference type="BioGRID-ORCS" id="21968">
    <property type="hits" value="1 hit in 77 CRISPR screens"/>
</dbReference>
<dbReference type="CD-CODE" id="CE726F99">
    <property type="entry name" value="Postsynaptic density"/>
</dbReference>
<dbReference type="ChiTaRS" id="Tom1">
    <property type="organism name" value="mouse"/>
</dbReference>
<dbReference type="PRO" id="PR:O88746"/>
<dbReference type="Proteomes" id="UP000000589">
    <property type="component" value="Chromosome 8"/>
</dbReference>
<dbReference type="RNAct" id="O88746">
    <property type="molecule type" value="protein"/>
</dbReference>
<dbReference type="Bgee" id="ENSMUSG00000042870">
    <property type="expression patterns" value="Expressed in lens of camera-type eye and 69 other cell types or tissues"/>
</dbReference>
<dbReference type="ExpressionAtlas" id="O88746">
    <property type="expression patterns" value="baseline and differential"/>
</dbReference>
<dbReference type="GO" id="GO:0005737">
    <property type="term" value="C:cytoplasm"/>
    <property type="evidence" value="ECO:0000250"/>
    <property type="project" value="UniProtKB"/>
</dbReference>
<dbReference type="GO" id="GO:0005829">
    <property type="term" value="C:cytosol"/>
    <property type="evidence" value="ECO:0000250"/>
    <property type="project" value="UniProtKB"/>
</dbReference>
<dbReference type="GO" id="GO:0005769">
    <property type="term" value="C:early endosome"/>
    <property type="evidence" value="ECO:0000250"/>
    <property type="project" value="UniProtKB"/>
</dbReference>
<dbReference type="GO" id="GO:0031901">
    <property type="term" value="C:early endosome membrane"/>
    <property type="evidence" value="ECO:0007669"/>
    <property type="project" value="UniProtKB-SubCell"/>
</dbReference>
<dbReference type="GO" id="GO:0005768">
    <property type="term" value="C:endosome"/>
    <property type="evidence" value="ECO:0000250"/>
    <property type="project" value="UniProtKB"/>
</dbReference>
<dbReference type="GO" id="GO:0010008">
    <property type="term" value="C:endosome membrane"/>
    <property type="evidence" value="ECO:0000250"/>
    <property type="project" value="UniProtKB"/>
</dbReference>
<dbReference type="GO" id="GO:0005794">
    <property type="term" value="C:Golgi apparatus"/>
    <property type="evidence" value="ECO:0007669"/>
    <property type="project" value="Ensembl"/>
</dbReference>
<dbReference type="GO" id="GO:0016020">
    <property type="term" value="C:membrane"/>
    <property type="evidence" value="ECO:0000250"/>
    <property type="project" value="UniProtKB"/>
</dbReference>
<dbReference type="GO" id="GO:0032050">
    <property type="term" value="F:clathrin heavy chain binding"/>
    <property type="evidence" value="ECO:0000250"/>
    <property type="project" value="UniProtKB"/>
</dbReference>
<dbReference type="GO" id="GO:0070853">
    <property type="term" value="F:myosin VI binding"/>
    <property type="evidence" value="ECO:0000250"/>
    <property type="project" value="UniProtKB"/>
</dbReference>
<dbReference type="GO" id="GO:0010314">
    <property type="term" value="F:phosphatidylinositol-5-phosphate binding"/>
    <property type="evidence" value="ECO:0000250"/>
    <property type="project" value="UniProtKB"/>
</dbReference>
<dbReference type="GO" id="GO:0031593">
    <property type="term" value="F:polyubiquitin modification-dependent protein binding"/>
    <property type="evidence" value="ECO:0000250"/>
    <property type="project" value="UniProtKB"/>
</dbReference>
<dbReference type="GO" id="GO:0043130">
    <property type="term" value="F:ubiquitin binding"/>
    <property type="evidence" value="ECO:0000250"/>
    <property type="project" value="UniProtKB"/>
</dbReference>
<dbReference type="GO" id="GO:0061909">
    <property type="term" value="P:autophagosome-lysosome fusion"/>
    <property type="evidence" value="ECO:0000250"/>
    <property type="project" value="UniProtKB"/>
</dbReference>
<dbReference type="GO" id="GO:0016197">
    <property type="term" value="P:endosomal transport"/>
    <property type="evidence" value="ECO:0000250"/>
    <property type="project" value="UniProtKB"/>
</dbReference>
<dbReference type="GO" id="GO:1901098">
    <property type="term" value="P:positive regulation of autophagosome maturation"/>
    <property type="evidence" value="ECO:0000250"/>
    <property type="project" value="UniProtKB"/>
</dbReference>
<dbReference type="GO" id="GO:0015031">
    <property type="term" value="P:protein transport"/>
    <property type="evidence" value="ECO:0007669"/>
    <property type="project" value="UniProtKB-KW"/>
</dbReference>
<dbReference type="GO" id="GO:1904978">
    <property type="term" value="P:regulation of endosome organization"/>
    <property type="evidence" value="ECO:0000250"/>
    <property type="project" value="UniProtKB"/>
</dbReference>
<dbReference type="GO" id="GO:0061753">
    <property type="term" value="P:substrate localization to autophagosome"/>
    <property type="evidence" value="ECO:0000250"/>
    <property type="project" value="UniProtKB"/>
</dbReference>
<dbReference type="CDD" id="cd14236">
    <property type="entry name" value="GAT_TOM1"/>
    <property type="match status" value="1"/>
</dbReference>
<dbReference type="CDD" id="cd16995">
    <property type="entry name" value="VHS_Tom1"/>
    <property type="match status" value="1"/>
</dbReference>
<dbReference type="FunFam" id="1.20.58.160:FF:000001">
    <property type="entry name" value="TOM1-like protein 2 isoform X1"/>
    <property type="match status" value="1"/>
</dbReference>
<dbReference type="FunFam" id="1.25.40.90:FF:000003">
    <property type="entry name" value="TOM1-like protein 2 isoform X1"/>
    <property type="match status" value="1"/>
</dbReference>
<dbReference type="Gene3D" id="1.20.58.160">
    <property type="match status" value="1"/>
</dbReference>
<dbReference type="Gene3D" id="1.25.40.90">
    <property type="match status" value="1"/>
</dbReference>
<dbReference type="InterPro" id="IPR008942">
    <property type="entry name" value="ENTH_VHS"/>
</dbReference>
<dbReference type="InterPro" id="IPR004152">
    <property type="entry name" value="GAT_dom"/>
</dbReference>
<dbReference type="InterPro" id="IPR038425">
    <property type="entry name" value="GAT_sf"/>
</dbReference>
<dbReference type="InterPro" id="IPR014645">
    <property type="entry name" value="TOM1"/>
</dbReference>
<dbReference type="InterPro" id="IPR002014">
    <property type="entry name" value="VHS_dom"/>
</dbReference>
<dbReference type="PANTHER" id="PTHR13856:SF32">
    <property type="entry name" value="TARGET OF MYB1 MEMBRANE TRAFFICKING PROTEIN"/>
    <property type="match status" value="1"/>
</dbReference>
<dbReference type="PANTHER" id="PTHR13856">
    <property type="entry name" value="VHS DOMAIN CONTAINING PROTEIN FAMILY"/>
    <property type="match status" value="1"/>
</dbReference>
<dbReference type="Pfam" id="PF03127">
    <property type="entry name" value="GAT"/>
    <property type="match status" value="1"/>
</dbReference>
<dbReference type="Pfam" id="PF00790">
    <property type="entry name" value="VHS"/>
    <property type="match status" value="1"/>
</dbReference>
<dbReference type="PIRSF" id="PIRSF036948">
    <property type="entry name" value="TOM1"/>
    <property type="match status" value="1"/>
</dbReference>
<dbReference type="SMART" id="SM00288">
    <property type="entry name" value="VHS"/>
    <property type="match status" value="1"/>
</dbReference>
<dbReference type="SUPFAM" id="SSF48464">
    <property type="entry name" value="ENTH/VHS domain"/>
    <property type="match status" value="1"/>
</dbReference>
<dbReference type="SUPFAM" id="SSF89009">
    <property type="entry name" value="GAT-like domain"/>
    <property type="match status" value="1"/>
</dbReference>
<dbReference type="PROSITE" id="PS50909">
    <property type="entry name" value="GAT"/>
    <property type="match status" value="1"/>
</dbReference>
<dbReference type="PROSITE" id="PS50179">
    <property type="entry name" value="VHS"/>
    <property type="match status" value="1"/>
</dbReference>
<proteinExistence type="evidence at protein level"/>
<organism>
    <name type="scientific">Mus musculus</name>
    <name type="common">Mouse</name>
    <dbReference type="NCBI Taxonomy" id="10090"/>
    <lineage>
        <taxon>Eukaryota</taxon>
        <taxon>Metazoa</taxon>
        <taxon>Chordata</taxon>
        <taxon>Craniata</taxon>
        <taxon>Vertebrata</taxon>
        <taxon>Euteleostomi</taxon>
        <taxon>Mammalia</taxon>
        <taxon>Eutheria</taxon>
        <taxon>Euarchontoglires</taxon>
        <taxon>Glires</taxon>
        <taxon>Rodentia</taxon>
        <taxon>Myomorpha</taxon>
        <taxon>Muroidea</taxon>
        <taxon>Muridae</taxon>
        <taxon>Murinae</taxon>
        <taxon>Mus</taxon>
        <taxon>Mus</taxon>
    </lineage>
</organism>
<protein>
    <recommendedName>
        <fullName evidence="1">Target of Myb1 membrane trafficking protein</fullName>
    </recommendedName>
    <alternativeName>
        <fullName evidence="7">Target of Myb protein 1</fullName>
    </alternativeName>
</protein>
<keyword id="KW-0007">Acetylation</keyword>
<keyword id="KW-0025">Alternative splicing</keyword>
<keyword id="KW-0963">Cytoplasm</keyword>
<keyword id="KW-0967">Endosome</keyword>
<keyword id="KW-1017">Isopeptide bond</keyword>
<keyword id="KW-0472">Membrane</keyword>
<keyword id="KW-0597">Phosphoprotein</keyword>
<keyword id="KW-0653">Protein transport</keyword>
<keyword id="KW-1185">Reference proteome</keyword>
<keyword id="KW-0813">Transport</keyword>
<keyword id="KW-0832">Ubl conjugation</keyword>
<feature type="chain" id="PRO_0000072629" description="Target of Myb1 membrane trafficking protein">
    <location>
        <begin position="1"/>
        <end position="492"/>
    </location>
</feature>
<feature type="domain" description="VHS" evidence="2">
    <location>
        <begin position="20"/>
        <end position="152"/>
    </location>
</feature>
<feature type="domain" description="GAT" evidence="3">
    <location>
        <begin position="215"/>
        <end position="303"/>
    </location>
</feature>
<feature type="region of interest" description="Disordered" evidence="4">
    <location>
        <begin position="167"/>
        <end position="215"/>
    </location>
</feature>
<feature type="region of interest" description="Clathrin box" evidence="1">
    <location>
        <begin position="321"/>
        <end position="326"/>
    </location>
</feature>
<feature type="region of interest" description="Interaction with MYO6" evidence="1">
    <location>
        <begin position="392"/>
        <end position="463"/>
    </location>
</feature>
<feature type="region of interest" description="Disordered" evidence="4">
    <location>
        <begin position="450"/>
        <end position="492"/>
    </location>
</feature>
<feature type="short sequence motif" description="KRKK" evidence="1">
    <location>
        <begin position="48"/>
        <end position="56"/>
    </location>
</feature>
<feature type="compositionally biased region" description="Polar residues" evidence="4">
    <location>
        <begin position="167"/>
        <end position="195"/>
    </location>
</feature>
<feature type="modified residue" description="N-acetylmethionine" evidence="1">
    <location>
        <position position="1"/>
    </location>
</feature>
<feature type="modified residue" description="Phosphoserine" evidence="1">
    <location>
        <position position="11"/>
    </location>
</feature>
<feature type="modified residue" description="Phosphoserine" evidence="10">
    <location>
        <position position="160"/>
    </location>
</feature>
<feature type="modified residue" description="Phosphothreonine" evidence="10">
    <location>
        <position position="164"/>
    </location>
</feature>
<feature type="modified residue" description="Phosphoserine" evidence="9 10">
    <location>
        <position position="176"/>
    </location>
</feature>
<feature type="modified residue" description="Phosphoserine" evidence="10">
    <location>
        <position position="180"/>
    </location>
</feature>
<feature type="modified residue" description="Phosphoserine" evidence="10">
    <location>
        <position position="208"/>
    </location>
</feature>
<feature type="modified residue" description="Phosphoserine" evidence="1">
    <location>
        <position position="355"/>
    </location>
</feature>
<feature type="modified residue" description="Phosphoserine" evidence="1">
    <location>
        <position position="376"/>
    </location>
</feature>
<feature type="modified residue" description="Phosphoserine" evidence="1">
    <location>
        <position position="462"/>
    </location>
</feature>
<feature type="cross-link" description="Glycyl lysine isopeptide (Lys-Gly) (interchain with G-Cter in SUMO2)" evidence="1">
    <location>
        <position position="385"/>
    </location>
</feature>
<feature type="splice variant" id="VSP_003991" description="In isoform 2." evidence="6">
    <location>
        <begin position="1"/>
        <end position="324"/>
    </location>
</feature>
<feature type="splice variant" id="VSP_003992" description="In isoform 2." evidence="6">
    <original>MGPDPAATNNLSSQLAGMN</original>
    <variation>MGRANGTAGLLPGPSVSAD</variation>
    <location>
        <begin position="325"/>
        <end position="343"/>
    </location>
</feature>
<evidence type="ECO:0000250" key="1">
    <source>
        <dbReference type="UniProtKB" id="O60784"/>
    </source>
</evidence>
<evidence type="ECO:0000255" key="2">
    <source>
        <dbReference type="PROSITE-ProRule" id="PRU00218"/>
    </source>
</evidence>
<evidence type="ECO:0000255" key="3">
    <source>
        <dbReference type="PROSITE-ProRule" id="PRU00373"/>
    </source>
</evidence>
<evidence type="ECO:0000256" key="4">
    <source>
        <dbReference type="SAM" id="MobiDB-lite"/>
    </source>
</evidence>
<evidence type="ECO:0000269" key="5">
    <source>
    </source>
</evidence>
<evidence type="ECO:0000303" key="6">
    <source>
    </source>
</evidence>
<evidence type="ECO:0000305" key="7"/>
<evidence type="ECO:0000312" key="8">
    <source>
        <dbReference type="MGI" id="MGI:1338026"/>
    </source>
</evidence>
<evidence type="ECO:0007744" key="9">
    <source>
    </source>
</evidence>
<evidence type="ECO:0007744" key="10">
    <source>
    </source>
</evidence>
<sequence>MDFLLGNPFSSPVGQRIEKATDGSLQSEDWALNMEICDIINETEEGPKDAFRAVKKRIMGNKNFHEVMLALTVLETCVKNCGHRFHVLVANQDFVENVLVRTILPKNNPPTIVHDKVLNLIQSWADAFRSSPDLTGVVAVYEDLRRKGLEFPMTDLDMLSPIHTPQRTVFNSETPSRQNSVSSNTSQRGDLSQHATPLPTPAVLPGDSPITPTPEQIGKLRSELEMVSGNVRVMSEMLTELVPTQVEPADLELLQELNRTCRAMQQRILELIPRISNEQLTEELLMINDNLNNVFLRHERFERFRTGQTAKASSEAELATDLIDMGPDPAATNNLSSQLAGMNLGSRSVRAGLQSLETSGHLEDDFDMFALTRGSSLADQRKGVKYEAPQTTDGLAGALDARQQSTGAIPATQARIMEDIEQWLSTDVGNSAEEPSGVTSEEFDKFLEERAKAADRLPNLASPSAEGPPRPSPGTAPRRKTQEKDDDMLFAL</sequence>